<sequence>MLTKRIIPCLDIKEGRVVKGTNFVELRDAGDPVELSKIYNEQGADELVFLDITASFEKRDIIIDVVKRTAEQVFIPLTVGGGIKTVDDFRKILRAGADKISINTSAVKTPELIKEASEIFGTQCVVVAMDVKRNYITDIQDENLKDKNVFETELGSCWFEVYIYGGREGTGIDAIEWAKKVENLGAGEILLTSMDADGTKDGYDLVLTKSISKNTNLPIIASGGCGNSKHVVDAFKDGKADAALMASILHYRECTVNDLKKEIEKNNISVRL</sequence>
<gene>
    <name evidence="1" type="primary">hisF</name>
    <name type="ordered locus">MmarC5_1684</name>
</gene>
<feature type="chain" id="PRO_1000063086" description="Imidazole glycerol phosphate synthase subunit HisF">
    <location>
        <begin position="1"/>
        <end position="272"/>
    </location>
</feature>
<feature type="active site" evidence="1">
    <location>
        <position position="11"/>
    </location>
</feature>
<feature type="active site" evidence="1">
    <location>
        <position position="130"/>
    </location>
</feature>
<proteinExistence type="inferred from homology"/>
<protein>
    <recommendedName>
        <fullName evidence="1">Imidazole glycerol phosphate synthase subunit HisF</fullName>
        <ecNumber evidence="1">4.3.2.10</ecNumber>
    </recommendedName>
    <alternativeName>
        <fullName evidence="1">IGP synthase cyclase subunit</fullName>
    </alternativeName>
    <alternativeName>
        <fullName evidence="1">IGP synthase subunit HisF</fullName>
    </alternativeName>
    <alternativeName>
        <fullName evidence="1">ImGP synthase subunit HisF</fullName>
        <shortName evidence="1">IGPS subunit HisF</shortName>
    </alternativeName>
</protein>
<name>HIS6_METM5</name>
<reference key="1">
    <citation type="submission" date="2007-03" db="EMBL/GenBank/DDBJ databases">
        <title>Complete sequence of chromosome of Methanococcus maripaludis C5.</title>
        <authorList>
            <consortium name="US DOE Joint Genome Institute"/>
            <person name="Copeland A."/>
            <person name="Lucas S."/>
            <person name="Lapidus A."/>
            <person name="Barry K."/>
            <person name="Glavina del Rio T."/>
            <person name="Dalin E."/>
            <person name="Tice H."/>
            <person name="Pitluck S."/>
            <person name="Chertkov O."/>
            <person name="Brettin T."/>
            <person name="Bruce D."/>
            <person name="Han C."/>
            <person name="Detter J.C."/>
            <person name="Schmutz J."/>
            <person name="Larimer F."/>
            <person name="Land M."/>
            <person name="Hauser L."/>
            <person name="Kyrpides N."/>
            <person name="Mikhailova N."/>
            <person name="Sieprawska-Lupa M."/>
            <person name="Whitman W.B."/>
            <person name="Richardson P."/>
        </authorList>
    </citation>
    <scope>NUCLEOTIDE SEQUENCE [LARGE SCALE GENOMIC DNA]</scope>
    <source>
        <strain>C5 / ATCC BAA-1333</strain>
    </source>
</reference>
<accession>A4G0J7</accession>
<keyword id="KW-0028">Amino-acid biosynthesis</keyword>
<keyword id="KW-0963">Cytoplasm</keyword>
<keyword id="KW-0368">Histidine biosynthesis</keyword>
<keyword id="KW-0456">Lyase</keyword>
<dbReference type="EC" id="4.3.2.10" evidence="1"/>
<dbReference type="EMBL" id="CP000609">
    <property type="protein sequence ID" value="ABO35981.1"/>
    <property type="molecule type" value="Genomic_DNA"/>
</dbReference>
<dbReference type="RefSeq" id="WP_011869428.1">
    <property type="nucleotide sequence ID" value="NC_009135.1"/>
</dbReference>
<dbReference type="SMR" id="A4G0J7"/>
<dbReference type="STRING" id="402880.MmarC5_1684"/>
<dbReference type="GeneID" id="4928082"/>
<dbReference type="KEGG" id="mmq:MmarC5_1684"/>
<dbReference type="eggNOG" id="arCOG00617">
    <property type="taxonomic scope" value="Archaea"/>
</dbReference>
<dbReference type="HOGENOM" id="CLU_048577_4_0_2"/>
<dbReference type="OrthoDB" id="6261at2157"/>
<dbReference type="UniPathway" id="UPA00031">
    <property type="reaction ID" value="UER00010"/>
</dbReference>
<dbReference type="Proteomes" id="UP000000253">
    <property type="component" value="Chromosome"/>
</dbReference>
<dbReference type="GO" id="GO:0005737">
    <property type="term" value="C:cytoplasm"/>
    <property type="evidence" value="ECO:0007669"/>
    <property type="project" value="UniProtKB-SubCell"/>
</dbReference>
<dbReference type="GO" id="GO:0000107">
    <property type="term" value="F:imidazoleglycerol-phosphate synthase activity"/>
    <property type="evidence" value="ECO:0007669"/>
    <property type="project" value="UniProtKB-UniRule"/>
</dbReference>
<dbReference type="GO" id="GO:0016829">
    <property type="term" value="F:lyase activity"/>
    <property type="evidence" value="ECO:0007669"/>
    <property type="project" value="UniProtKB-KW"/>
</dbReference>
<dbReference type="GO" id="GO:0000105">
    <property type="term" value="P:L-histidine biosynthetic process"/>
    <property type="evidence" value="ECO:0007669"/>
    <property type="project" value="UniProtKB-UniRule"/>
</dbReference>
<dbReference type="CDD" id="cd04731">
    <property type="entry name" value="HisF"/>
    <property type="match status" value="1"/>
</dbReference>
<dbReference type="FunFam" id="3.20.20.70:FF:000006">
    <property type="entry name" value="Imidazole glycerol phosphate synthase subunit HisF"/>
    <property type="match status" value="1"/>
</dbReference>
<dbReference type="Gene3D" id="3.20.20.70">
    <property type="entry name" value="Aldolase class I"/>
    <property type="match status" value="1"/>
</dbReference>
<dbReference type="HAMAP" id="MF_01013">
    <property type="entry name" value="HisF"/>
    <property type="match status" value="1"/>
</dbReference>
<dbReference type="InterPro" id="IPR013785">
    <property type="entry name" value="Aldolase_TIM"/>
</dbReference>
<dbReference type="InterPro" id="IPR006062">
    <property type="entry name" value="His_biosynth"/>
</dbReference>
<dbReference type="InterPro" id="IPR004651">
    <property type="entry name" value="HisF"/>
</dbReference>
<dbReference type="InterPro" id="IPR050064">
    <property type="entry name" value="IGPS_HisA/HisF"/>
</dbReference>
<dbReference type="InterPro" id="IPR011060">
    <property type="entry name" value="RibuloseP-bd_barrel"/>
</dbReference>
<dbReference type="NCBIfam" id="TIGR00735">
    <property type="entry name" value="hisF"/>
    <property type="match status" value="1"/>
</dbReference>
<dbReference type="PANTHER" id="PTHR21235:SF2">
    <property type="entry name" value="IMIDAZOLE GLYCEROL PHOSPHATE SYNTHASE HISHF"/>
    <property type="match status" value="1"/>
</dbReference>
<dbReference type="PANTHER" id="PTHR21235">
    <property type="entry name" value="IMIDAZOLE GLYCEROL PHOSPHATE SYNTHASE SUBUNIT HISF/H IGP SYNTHASE SUBUNIT HISF/H"/>
    <property type="match status" value="1"/>
</dbReference>
<dbReference type="Pfam" id="PF00977">
    <property type="entry name" value="His_biosynth"/>
    <property type="match status" value="1"/>
</dbReference>
<dbReference type="SUPFAM" id="SSF51366">
    <property type="entry name" value="Ribulose-phoshate binding barrel"/>
    <property type="match status" value="1"/>
</dbReference>
<organism>
    <name type="scientific">Methanococcus maripaludis (strain C5 / ATCC BAA-1333)</name>
    <dbReference type="NCBI Taxonomy" id="402880"/>
    <lineage>
        <taxon>Archaea</taxon>
        <taxon>Methanobacteriati</taxon>
        <taxon>Methanobacteriota</taxon>
        <taxon>Methanomada group</taxon>
        <taxon>Methanococci</taxon>
        <taxon>Methanococcales</taxon>
        <taxon>Methanococcaceae</taxon>
        <taxon>Methanococcus</taxon>
    </lineage>
</organism>
<evidence type="ECO:0000255" key="1">
    <source>
        <dbReference type="HAMAP-Rule" id="MF_01013"/>
    </source>
</evidence>
<comment type="function">
    <text evidence="1">IGPS catalyzes the conversion of PRFAR and glutamine to IGP, AICAR and glutamate. The HisF subunit catalyzes the cyclization activity that produces IGP and AICAR from PRFAR using the ammonia provided by the HisH subunit.</text>
</comment>
<comment type="catalytic activity">
    <reaction evidence="1">
        <text>5-[(5-phospho-1-deoxy-D-ribulos-1-ylimino)methylamino]-1-(5-phospho-beta-D-ribosyl)imidazole-4-carboxamide + L-glutamine = D-erythro-1-(imidazol-4-yl)glycerol 3-phosphate + 5-amino-1-(5-phospho-beta-D-ribosyl)imidazole-4-carboxamide + L-glutamate + H(+)</text>
        <dbReference type="Rhea" id="RHEA:24793"/>
        <dbReference type="ChEBI" id="CHEBI:15378"/>
        <dbReference type="ChEBI" id="CHEBI:29985"/>
        <dbReference type="ChEBI" id="CHEBI:58278"/>
        <dbReference type="ChEBI" id="CHEBI:58359"/>
        <dbReference type="ChEBI" id="CHEBI:58475"/>
        <dbReference type="ChEBI" id="CHEBI:58525"/>
        <dbReference type="EC" id="4.3.2.10"/>
    </reaction>
</comment>
<comment type="pathway">
    <text evidence="1">Amino-acid biosynthesis; L-histidine biosynthesis; L-histidine from 5-phospho-alpha-D-ribose 1-diphosphate: step 5/9.</text>
</comment>
<comment type="subunit">
    <text evidence="1">Heterodimer of HisH and HisF.</text>
</comment>
<comment type="subcellular location">
    <subcellularLocation>
        <location evidence="1">Cytoplasm</location>
    </subcellularLocation>
</comment>
<comment type="similarity">
    <text evidence="1">Belongs to the HisA/HisF family.</text>
</comment>